<dbReference type="EC" id="2.4.2.8" evidence="1"/>
<dbReference type="EMBL" id="AE008384">
    <property type="protein sequence ID" value="AAM31572.1"/>
    <property type="molecule type" value="Genomic_DNA"/>
</dbReference>
<dbReference type="RefSeq" id="WP_011033811.1">
    <property type="nucleotide sequence ID" value="NC_003901.1"/>
</dbReference>
<dbReference type="SMR" id="Q8PVT4"/>
<dbReference type="GeneID" id="82160928"/>
<dbReference type="KEGG" id="mma:MM_1876"/>
<dbReference type="PATRIC" id="fig|192952.21.peg.2163"/>
<dbReference type="eggNOG" id="arCOG00030">
    <property type="taxonomic scope" value="Archaea"/>
</dbReference>
<dbReference type="HOGENOM" id="CLU_126376_0_0_2"/>
<dbReference type="UniPathway" id="UPA00591">
    <property type="reaction ID" value="UER00648"/>
</dbReference>
<dbReference type="Proteomes" id="UP000000595">
    <property type="component" value="Chromosome"/>
</dbReference>
<dbReference type="GO" id="GO:0005737">
    <property type="term" value="C:cytoplasm"/>
    <property type="evidence" value="ECO:0007669"/>
    <property type="project" value="UniProtKB-SubCell"/>
</dbReference>
<dbReference type="GO" id="GO:0052657">
    <property type="term" value="F:guanine phosphoribosyltransferase activity"/>
    <property type="evidence" value="ECO:0007669"/>
    <property type="project" value="RHEA"/>
</dbReference>
<dbReference type="GO" id="GO:0004422">
    <property type="term" value="F:hypoxanthine phosphoribosyltransferase activity"/>
    <property type="evidence" value="ECO:0007669"/>
    <property type="project" value="UniProtKB-UniRule"/>
</dbReference>
<dbReference type="GO" id="GO:0032264">
    <property type="term" value="P:IMP salvage"/>
    <property type="evidence" value="ECO:0007669"/>
    <property type="project" value="UniProtKB-UniRule"/>
</dbReference>
<dbReference type="GO" id="GO:0006166">
    <property type="term" value="P:purine ribonucleoside salvage"/>
    <property type="evidence" value="ECO:0007669"/>
    <property type="project" value="UniProtKB-KW"/>
</dbReference>
<dbReference type="CDD" id="cd06223">
    <property type="entry name" value="PRTases_typeI"/>
    <property type="match status" value="1"/>
</dbReference>
<dbReference type="Gene3D" id="3.40.50.2020">
    <property type="match status" value="1"/>
</dbReference>
<dbReference type="HAMAP" id="MF_01467">
    <property type="entry name" value="Hypx_phosphoribosyltr"/>
    <property type="match status" value="1"/>
</dbReference>
<dbReference type="InterPro" id="IPR026597">
    <property type="entry name" value="HGPRTase-like"/>
</dbReference>
<dbReference type="InterPro" id="IPR000836">
    <property type="entry name" value="PRibTrfase_dom"/>
</dbReference>
<dbReference type="InterPro" id="IPR029057">
    <property type="entry name" value="PRTase-like"/>
</dbReference>
<dbReference type="InterPro" id="IPR050118">
    <property type="entry name" value="Pur/Pyrimidine_PRTase"/>
</dbReference>
<dbReference type="NCBIfam" id="NF040646">
    <property type="entry name" value="HPT_Archaea"/>
    <property type="match status" value="1"/>
</dbReference>
<dbReference type="NCBIfam" id="NF002635">
    <property type="entry name" value="PRK02304.1-4"/>
    <property type="match status" value="1"/>
</dbReference>
<dbReference type="PANTHER" id="PTHR43864">
    <property type="entry name" value="HYPOXANTHINE/GUANINE PHOSPHORIBOSYLTRANSFERASE"/>
    <property type="match status" value="1"/>
</dbReference>
<dbReference type="PANTHER" id="PTHR43864:SF1">
    <property type="entry name" value="XANTHINE PHOSPHORIBOSYLTRANSFERASE"/>
    <property type="match status" value="1"/>
</dbReference>
<dbReference type="Pfam" id="PF00156">
    <property type="entry name" value="Pribosyltran"/>
    <property type="match status" value="1"/>
</dbReference>
<dbReference type="SUPFAM" id="SSF53271">
    <property type="entry name" value="PRTase-like"/>
    <property type="match status" value="1"/>
</dbReference>
<dbReference type="PROSITE" id="PS00103">
    <property type="entry name" value="PUR_PYR_PR_TRANSFER"/>
    <property type="match status" value="1"/>
</dbReference>
<protein>
    <recommendedName>
        <fullName evidence="1">Hypoxanthine/guanine phosphoribosyltransferase</fullName>
        <shortName evidence="1">HGPRTase</shortName>
        <ecNumber evidence="1">2.4.2.8</ecNumber>
    </recommendedName>
</protein>
<reference key="1">
    <citation type="journal article" date="2002" name="J. Mol. Microbiol. Biotechnol.">
        <title>The genome of Methanosarcina mazei: evidence for lateral gene transfer between Bacteria and Archaea.</title>
        <authorList>
            <person name="Deppenmeier U."/>
            <person name="Johann A."/>
            <person name="Hartsch T."/>
            <person name="Merkl R."/>
            <person name="Schmitz R.A."/>
            <person name="Martinez-Arias R."/>
            <person name="Henne A."/>
            <person name="Wiezer A."/>
            <person name="Baeumer S."/>
            <person name="Jacobi C."/>
            <person name="Brueggemann H."/>
            <person name="Lienard T."/>
            <person name="Christmann A."/>
            <person name="Boemecke M."/>
            <person name="Steckel S."/>
            <person name="Bhattacharyya A."/>
            <person name="Lykidis A."/>
            <person name="Overbeek R."/>
            <person name="Klenk H.-P."/>
            <person name="Gunsalus R.P."/>
            <person name="Fritz H.-J."/>
            <person name="Gottschalk G."/>
        </authorList>
    </citation>
    <scope>NUCLEOTIDE SEQUENCE [LARGE SCALE GENOMIC DNA]</scope>
    <source>
        <strain>ATCC BAA-159 / DSM 3647 / Goe1 / Go1 / JCM 11833 / OCM 88</strain>
    </source>
</reference>
<name>HPRT_METMA</name>
<organism>
    <name type="scientific">Methanosarcina mazei (strain ATCC BAA-159 / DSM 3647 / Goe1 / Go1 / JCM 11833 / OCM 88)</name>
    <name type="common">Methanosarcina frisia</name>
    <dbReference type="NCBI Taxonomy" id="192952"/>
    <lineage>
        <taxon>Archaea</taxon>
        <taxon>Methanobacteriati</taxon>
        <taxon>Methanobacteriota</taxon>
        <taxon>Stenosarchaea group</taxon>
        <taxon>Methanomicrobia</taxon>
        <taxon>Methanosarcinales</taxon>
        <taxon>Methanosarcinaceae</taxon>
        <taxon>Methanosarcina</taxon>
    </lineage>
</organism>
<gene>
    <name evidence="1" type="primary">hpt</name>
    <name type="ordered locus">MM_1876</name>
</gene>
<sequence>MLERLKDSLIRSPIIKRGEYNYFIHPISDGVPSIDPHLVEEISDYISEIADMNVDTILTVEAMGIPVANALSLKTGIPLTIVRKRPYFLEGEVELSQSTGYSKGVLYINGLKKGDRIIIVDDVISTGGTLLALVRALQTIGVEVMDVISVIGRGDGYLKLRELGVEPKILVTIDVGEKGVEIKDVFGNQ</sequence>
<keyword id="KW-0963">Cytoplasm</keyword>
<keyword id="KW-0328">Glycosyltransferase</keyword>
<keyword id="KW-0660">Purine salvage</keyword>
<keyword id="KW-0808">Transferase</keyword>
<accession>Q8PVT4</accession>
<feature type="chain" id="PRO_0000415482" description="Hypoxanthine/guanine phosphoribosyltransferase">
    <location>
        <begin position="1"/>
        <end position="189"/>
    </location>
</feature>
<proteinExistence type="inferred from homology"/>
<comment type="function">
    <text evidence="1">Catalyzes a salvage reaction resulting in the formation of IMP that is energically less costly than de novo synthesis.</text>
</comment>
<comment type="catalytic activity">
    <reaction evidence="1">
        <text>IMP + diphosphate = hypoxanthine + 5-phospho-alpha-D-ribose 1-diphosphate</text>
        <dbReference type="Rhea" id="RHEA:17973"/>
        <dbReference type="ChEBI" id="CHEBI:17368"/>
        <dbReference type="ChEBI" id="CHEBI:33019"/>
        <dbReference type="ChEBI" id="CHEBI:58017"/>
        <dbReference type="ChEBI" id="CHEBI:58053"/>
        <dbReference type="EC" id="2.4.2.8"/>
    </reaction>
</comment>
<comment type="catalytic activity">
    <reaction evidence="1">
        <text>GMP + diphosphate = guanine + 5-phospho-alpha-D-ribose 1-diphosphate</text>
        <dbReference type="Rhea" id="RHEA:25424"/>
        <dbReference type="ChEBI" id="CHEBI:16235"/>
        <dbReference type="ChEBI" id="CHEBI:33019"/>
        <dbReference type="ChEBI" id="CHEBI:58017"/>
        <dbReference type="ChEBI" id="CHEBI:58115"/>
        <dbReference type="EC" id="2.4.2.8"/>
    </reaction>
</comment>
<comment type="pathway">
    <text evidence="1">Purine metabolism; IMP biosynthesis via salvage pathway; IMP from hypoxanthine: step 1/1.</text>
</comment>
<comment type="subunit">
    <text evidence="1">Homodimer.</text>
</comment>
<comment type="subcellular location">
    <subcellularLocation>
        <location evidence="1">Cytoplasm</location>
    </subcellularLocation>
</comment>
<comment type="similarity">
    <text evidence="1">Belongs to the purine/pyrimidine phosphoribosyltransferase family. Archaeal HPRT subfamily.</text>
</comment>
<evidence type="ECO:0000255" key="1">
    <source>
        <dbReference type="HAMAP-Rule" id="MF_01467"/>
    </source>
</evidence>